<gene>
    <name type="primary">Peli2</name>
</gene>
<comment type="function">
    <text evidence="2 4">E3 ubiquitin ligase catalyzing the covalent attachment of ubiquitin moieties onto substrate proteins. Involved in the TLR and IL-1 signaling pathways via interaction with the complex containing IRAK kinases and TRAF6. Mediates IL1B-induced IRAK1 'Lys-63'-linked polyubiquitination and possibly 'Lys-48'-linked ubiquitination. May be important for LPS- and IL1B-induced MAP3K7-dependent, but not MAP3K3-dependent, NF-kappa-B activation. Can activate the MAP (mitogen activated protein) kinase pathway leading to activation of ELK1.</text>
</comment>
<comment type="catalytic activity">
    <reaction>
        <text>S-ubiquitinyl-[E2 ubiquitin-conjugating enzyme]-L-cysteine + [acceptor protein]-L-lysine = [E2 ubiquitin-conjugating enzyme]-L-cysteine + N(6)-ubiquitinyl-[acceptor protein]-L-lysine.</text>
        <dbReference type="EC" id="2.3.2.27"/>
    </reaction>
</comment>
<comment type="pathway">
    <text>Protein modification; protein ubiquitination.</text>
</comment>
<comment type="subunit">
    <text evidence="1 2 3">Interacts with TRAF6, IRAK4 and MAP3K7 (By similarity). Interacts with IRAK1. Interacts with BCL10; this interaction is impaired by SOCS3.</text>
</comment>
<comment type="interaction">
    <interactant intactId="EBI-448554">
        <id>Q8BST6</id>
    </interactant>
    <interactant intactId="EBI-448533">
        <id>Q62406</id>
        <label>Irak1</label>
    </interactant>
    <organismsDiffer>false</organismsDiffer>
    <experiments>2</experiments>
</comment>
<comment type="alternative products">
    <event type="alternative splicing"/>
    <isoform>
        <id>Q8BST6-1</id>
        <name>1</name>
        <sequence type="displayed"/>
    </isoform>
    <isoform>
        <id>Q8BST6-2</id>
        <name>2</name>
        <sequence type="described" ref="VSP_008636"/>
    </isoform>
    <isoform>
        <id>Q8BST6-3</id>
        <name>3</name>
        <sequence type="described" ref="VSP_008637 VSP_008638"/>
    </isoform>
</comment>
<comment type="tissue specificity">
    <text evidence="2">Widely expressed both in embryos and adult. Weakly or not expressed in spleen and thymus.</text>
</comment>
<comment type="domain">
    <text evidence="1">The atypical FHA domain contains a 'wing' insert and mediates binding to threonine-phosphorylated IRAK1.</text>
</comment>
<comment type="PTM">
    <text evidence="1">Phosphorylated by IRAK1 and IRAK4 enhancing its E3 ligase activity.</text>
</comment>
<comment type="similarity">
    <text evidence="7">Belongs to the pellino family.</text>
</comment>
<feature type="chain" id="PRO_0000194175" description="E3 ubiquitin-protein ligase pellino homolog 2">
    <location>
        <begin position="1"/>
        <end position="419"/>
    </location>
</feature>
<feature type="domain" description="FHA; atypical">
    <location>
        <begin position="15"/>
        <end position="202"/>
    </location>
</feature>
<feature type="splice variant" id="VSP_008636" description="In isoform 2." evidence="5">
    <location>
        <begin position="1"/>
        <end position="100"/>
    </location>
</feature>
<feature type="splice variant" id="VSP_008637" description="In isoform 3." evidence="6">
    <original>AISSRGHHSISYTLSRSQTVVVEYTHDKDTDMFQVGRSTESPIDFVVTDTVSGGQNEDAQITQSTISRFACRIVCDRNEPYTARIF</original>
    <variation>LPAAKHYYNEADSESLSALTLKVRDFLTGECSQRREYRDPAFSREGASGSAQLVAQAFLICPLSYTIVKQEQIRCLKKKIFFSCWS</variation>
    <location>
        <begin position="70"/>
        <end position="155"/>
    </location>
</feature>
<feature type="splice variant" id="VSP_008638" description="In isoform 3." evidence="6">
    <location>
        <begin position="156"/>
        <end position="419"/>
    </location>
</feature>
<feature type="sequence conflict" description="In Ref. 2; BAC27024." evidence="7" ref="2">
    <original>E</original>
    <variation>K</variation>
    <location>
        <position position="7"/>
    </location>
</feature>
<feature type="sequence conflict" description="In Ref. 2; BAC27024." evidence="7" ref="2">
    <original>A</original>
    <variation>T</variation>
    <location>
        <position position="11"/>
    </location>
</feature>
<feature type="sequence conflict" description="In Ref. 2; BAC38472." evidence="7" ref="2">
    <original>R</original>
    <variation>G</variation>
    <location>
        <position position="20"/>
    </location>
</feature>
<feature type="sequence conflict" description="In Ref. 1; AAG15392." evidence="7" ref="1">
    <original>RR</original>
    <variation>KK</variation>
    <location>
        <begin position="38"/>
        <end position="39"/>
    </location>
</feature>
<feature type="sequence conflict" description="In Ref. 1; AAG15392." evidence="7" ref="1">
    <original>A</original>
    <variation>T</variation>
    <location>
        <position position="44"/>
    </location>
</feature>
<feature type="sequence conflict" description="In Ref. 1; AAG15392." evidence="7" ref="1">
    <original>S</original>
    <variation>H</variation>
    <location>
        <position position="320"/>
    </location>
</feature>
<feature type="sequence conflict" description="In Ref. 3; AAH27062." evidence="7" ref="3">
    <original>T</original>
    <variation>A</variation>
    <location>
        <position position="327"/>
    </location>
</feature>
<feature type="sequence conflict" description="In Ref. 1; AAG15392." evidence="7" ref="1">
    <original>R</original>
    <variation>M</variation>
    <location>
        <position position="338"/>
    </location>
</feature>
<feature type="sequence conflict" description="In Ref. 1; AAG15392." evidence="7" ref="1">
    <original>A</original>
    <variation>V</variation>
    <location>
        <position position="364"/>
    </location>
</feature>
<keyword id="KW-0025">Alternative splicing</keyword>
<keyword id="KW-0597">Phosphoprotein</keyword>
<keyword id="KW-1185">Reference proteome</keyword>
<keyword id="KW-0808">Transferase</keyword>
<keyword id="KW-0833">Ubl conjugation pathway</keyword>
<reference key="1">
    <citation type="journal article" date="2001" name="Cytogenet. Cell Genet.">
        <title>Assignment of homologous genes, Peli1/PELI1 and Peli2/PELI2, for the Pelle adaptor protein Pellino to mouse chromosomes 11 and 14 and human chromosomes 2p13.3 and 14q21, respectively, by physical and radiation hybrid mapping.</title>
        <authorList>
            <person name="Resch K."/>
            <person name="Jockusch H."/>
            <person name="Schmitt-John T."/>
        </authorList>
    </citation>
    <scope>NUCLEOTIDE SEQUENCE [MRNA] (ISOFORM 1)</scope>
    <source>
        <strain>C57BL/6J</strain>
    </source>
</reference>
<reference key="2">
    <citation type="journal article" date="2005" name="Science">
        <title>The transcriptional landscape of the mammalian genome.</title>
        <authorList>
            <person name="Carninci P."/>
            <person name="Kasukawa T."/>
            <person name="Katayama S."/>
            <person name="Gough J."/>
            <person name="Frith M.C."/>
            <person name="Maeda N."/>
            <person name="Oyama R."/>
            <person name="Ravasi T."/>
            <person name="Lenhard B."/>
            <person name="Wells C."/>
            <person name="Kodzius R."/>
            <person name="Shimokawa K."/>
            <person name="Bajic V.B."/>
            <person name="Brenner S.E."/>
            <person name="Batalov S."/>
            <person name="Forrest A.R."/>
            <person name="Zavolan M."/>
            <person name="Davis M.J."/>
            <person name="Wilming L.G."/>
            <person name="Aidinis V."/>
            <person name="Allen J.E."/>
            <person name="Ambesi-Impiombato A."/>
            <person name="Apweiler R."/>
            <person name="Aturaliya R.N."/>
            <person name="Bailey T.L."/>
            <person name="Bansal M."/>
            <person name="Baxter L."/>
            <person name="Beisel K.W."/>
            <person name="Bersano T."/>
            <person name="Bono H."/>
            <person name="Chalk A.M."/>
            <person name="Chiu K.P."/>
            <person name="Choudhary V."/>
            <person name="Christoffels A."/>
            <person name="Clutterbuck D.R."/>
            <person name="Crowe M.L."/>
            <person name="Dalla E."/>
            <person name="Dalrymple B.P."/>
            <person name="de Bono B."/>
            <person name="Della Gatta G."/>
            <person name="di Bernardo D."/>
            <person name="Down T."/>
            <person name="Engstrom P."/>
            <person name="Fagiolini M."/>
            <person name="Faulkner G."/>
            <person name="Fletcher C.F."/>
            <person name="Fukushima T."/>
            <person name="Furuno M."/>
            <person name="Futaki S."/>
            <person name="Gariboldi M."/>
            <person name="Georgii-Hemming P."/>
            <person name="Gingeras T.R."/>
            <person name="Gojobori T."/>
            <person name="Green R.E."/>
            <person name="Gustincich S."/>
            <person name="Harbers M."/>
            <person name="Hayashi Y."/>
            <person name="Hensch T.K."/>
            <person name="Hirokawa N."/>
            <person name="Hill D."/>
            <person name="Huminiecki L."/>
            <person name="Iacono M."/>
            <person name="Ikeo K."/>
            <person name="Iwama A."/>
            <person name="Ishikawa T."/>
            <person name="Jakt M."/>
            <person name="Kanapin A."/>
            <person name="Katoh M."/>
            <person name="Kawasawa Y."/>
            <person name="Kelso J."/>
            <person name="Kitamura H."/>
            <person name="Kitano H."/>
            <person name="Kollias G."/>
            <person name="Krishnan S.P."/>
            <person name="Kruger A."/>
            <person name="Kummerfeld S.K."/>
            <person name="Kurochkin I.V."/>
            <person name="Lareau L.F."/>
            <person name="Lazarevic D."/>
            <person name="Lipovich L."/>
            <person name="Liu J."/>
            <person name="Liuni S."/>
            <person name="McWilliam S."/>
            <person name="Madan Babu M."/>
            <person name="Madera M."/>
            <person name="Marchionni L."/>
            <person name="Matsuda H."/>
            <person name="Matsuzawa S."/>
            <person name="Miki H."/>
            <person name="Mignone F."/>
            <person name="Miyake S."/>
            <person name="Morris K."/>
            <person name="Mottagui-Tabar S."/>
            <person name="Mulder N."/>
            <person name="Nakano N."/>
            <person name="Nakauchi H."/>
            <person name="Ng P."/>
            <person name="Nilsson R."/>
            <person name="Nishiguchi S."/>
            <person name="Nishikawa S."/>
            <person name="Nori F."/>
            <person name="Ohara O."/>
            <person name="Okazaki Y."/>
            <person name="Orlando V."/>
            <person name="Pang K.C."/>
            <person name="Pavan W.J."/>
            <person name="Pavesi G."/>
            <person name="Pesole G."/>
            <person name="Petrovsky N."/>
            <person name="Piazza S."/>
            <person name="Reed J."/>
            <person name="Reid J.F."/>
            <person name="Ring B.Z."/>
            <person name="Ringwald M."/>
            <person name="Rost B."/>
            <person name="Ruan Y."/>
            <person name="Salzberg S.L."/>
            <person name="Sandelin A."/>
            <person name="Schneider C."/>
            <person name="Schoenbach C."/>
            <person name="Sekiguchi K."/>
            <person name="Semple C.A."/>
            <person name="Seno S."/>
            <person name="Sessa L."/>
            <person name="Sheng Y."/>
            <person name="Shibata Y."/>
            <person name="Shimada H."/>
            <person name="Shimada K."/>
            <person name="Silva D."/>
            <person name="Sinclair B."/>
            <person name="Sperling S."/>
            <person name="Stupka E."/>
            <person name="Sugiura K."/>
            <person name="Sultana R."/>
            <person name="Takenaka Y."/>
            <person name="Taki K."/>
            <person name="Tammoja K."/>
            <person name="Tan S.L."/>
            <person name="Tang S."/>
            <person name="Taylor M.S."/>
            <person name="Tegner J."/>
            <person name="Teichmann S.A."/>
            <person name="Ueda H.R."/>
            <person name="van Nimwegen E."/>
            <person name="Verardo R."/>
            <person name="Wei C.L."/>
            <person name="Yagi K."/>
            <person name="Yamanishi H."/>
            <person name="Zabarovsky E."/>
            <person name="Zhu S."/>
            <person name="Zimmer A."/>
            <person name="Hide W."/>
            <person name="Bult C."/>
            <person name="Grimmond S.M."/>
            <person name="Teasdale R.D."/>
            <person name="Liu E.T."/>
            <person name="Brusic V."/>
            <person name="Quackenbush J."/>
            <person name="Wahlestedt C."/>
            <person name="Mattick J.S."/>
            <person name="Hume D.A."/>
            <person name="Kai C."/>
            <person name="Sasaki D."/>
            <person name="Tomaru Y."/>
            <person name="Fukuda S."/>
            <person name="Kanamori-Katayama M."/>
            <person name="Suzuki M."/>
            <person name="Aoki J."/>
            <person name="Arakawa T."/>
            <person name="Iida J."/>
            <person name="Imamura K."/>
            <person name="Itoh M."/>
            <person name="Kato T."/>
            <person name="Kawaji H."/>
            <person name="Kawagashira N."/>
            <person name="Kawashima T."/>
            <person name="Kojima M."/>
            <person name="Kondo S."/>
            <person name="Konno H."/>
            <person name="Nakano K."/>
            <person name="Ninomiya N."/>
            <person name="Nishio T."/>
            <person name="Okada M."/>
            <person name="Plessy C."/>
            <person name="Shibata K."/>
            <person name="Shiraki T."/>
            <person name="Suzuki S."/>
            <person name="Tagami M."/>
            <person name="Waki K."/>
            <person name="Watahiki A."/>
            <person name="Okamura-Oho Y."/>
            <person name="Suzuki H."/>
            <person name="Kawai J."/>
            <person name="Hayashizaki Y."/>
        </authorList>
    </citation>
    <scope>NUCLEOTIDE SEQUENCE [LARGE SCALE MRNA] (ISOFORMS 1 AND 3)</scope>
    <source>
        <strain>C57BL/6J</strain>
        <tissue>Cerebellum</tissue>
        <tissue>Epididymis</tissue>
        <tissue>Pituitary</tissue>
    </source>
</reference>
<reference key="3">
    <citation type="journal article" date="2004" name="Genome Res.">
        <title>The status, quality, and expansion of the NIH full-length cDNA project: the Mammalian Gene Collection (MGC).</title>
        <authorList>
            <consortium name="The MGC Project Team"/>
        </authorList>
    </citation>
    <scope>NUCLEOTIDE SEQUENCE [LARGE SCALE MRNA] (ISOFORM 2)</scope>
    <source>
        <tissue>Mammary tumor</tissue>
    </source>
</reference>
<reference key="4">
    <citation type="journal article" date="2002" name="J. Immunol.">
        <title>Mouse pellino-2 modulates IL-1 and lipopolysaccharide signaling.</title>
        <authorList>
            <person name="Yu K.-Y."/>
            <person name="Kwon H.-J."/>
            <person name="Norman D.A.M."/>
            <person name="Vig E."/>
            <person name="Goebl M.G."/>
            <person name="Harrington M.A."/>
        </authorList>
    </citation>
    <scope>FUNCTION</scope>
    <scope>TISSUE SPECIFICITY</scope>
    <scope>INTERACTION WITH IRAK1</scope>
</reference>
<reference key="5">
    <citation type="journal article" date="2004" name="J. Biol. Chem.">
        <title>BCL10 mediates lipopolysaccharide/toll-like receptor-4 signaling through interaction with Pellino2.</title>
        <authorList>
            <person name="Liu Y."/>
            <person name="Dong W."/>
            <person name="Chen L."/>
            <person name="Xiang R."/>
            <person name="Xiao H."/>
            <person name="De G."/>
            <person name="Wang Z."/>
            <person name="Qi Y."/>
        </authorList>
    </citation>
    <scope>INTERACTION WITH BCL10</scope>
</reference>
<reference key="6">
    <citation type="journal article" date="2012" name="J. Biol. Chem.">
        <title>Pellino 2 is critical for Toll-like receptor/interleukin-1 receptor (TLR/IL-1R)-mediated post-transcriptional control.</title>
        <authorList>
            <person name="Kim T.W."/>
            <person name="Yu M."/>
            <person name="Zhou H."/>
            <person name="Cui W."/>
            <person name="Wang J."/>
            <person name="DiCorleto P."/>
            <person name="Fox P."/>
            <person name="Xiao H."/>
            <person name="Li X."/>
        </authorList>
    </citation>
    <scope>FUNCTION</scope>
</reference>
<name>PELI2_MOUSE</name>
<accession>Q8BST6</accession>
<accession>Q8C4F2</accession>
<accession>Q8CC65</accession>
<accession>Q8R2X4</accession>
<accession>Q9ERJ7</accession>
<dbReference type="EC" id="2.3.2.27"/>
<dbReference type="EMBL" id="AF302504">
    <property type="protein sequence ID" value="AAG15392.1"/>
    <property type="molecule type" value="mRNA"/>
</dbReference>
<dbReference type="EMBL" id="AK030564">
    <property type="protein sequence ID" value="BAC27024.1"/>
    <property type="molecule type" value="mRNA"/>
</dbReference>
<dbReference type="EMBL" id="AK033815">
    <property type="protein sequence ID" value="BAC28485.1"/>
    <property type="molecule type" value="mRNA"/>
</dbReference>
<dbReference type="EMBL" id="AK082342">
    <property type="protein sequence ID" value="BAC38472.1"/>
    <property type="molecule type" value="mRNA"/>
</dbReference>
<dbReference type="EMBL" id="BC027062">
    <property type="protein sequence ID" value="AAH27062.1"/>
    <property type="molecule type" value="mRNA"/>
</dbReference>
<dbReference type="CCDS" id="CCDS36901.1">
    <molecule id="Q8BST6-1"/>
</dbReference>
<dbReference type="RefSeq" id="NP_291080.2">
    <property type="nucleotide sequence ID" value="NM_033602.2"/>
</dbReference>
<dbReference type="RefSeq" id="XP_006519804.1">
    <property type="nucleotide sequence ID" value="XM_006519741.2"/>
</dbReference>
<dbReference type="SMR" id="Q8BST6"/>
<dbReference type="BioGRID" id="220309">
    <property type="interactions" value="3"/>
</dbReference>
<dbReference type="FunCoup" id="Q8BST6">
    <property type="interactions" value="601"/>
</dbReference>
<dbReference type="IntAct" id="Q8BST6">
    <property type="interactions" value="1"/>
</dbReference>
<dbReference type="STRING" id="10090.ENSMUSP00000072894"/>
<dbReference type="iPTMnet" id="Q8BST6"/>
<dbReference type="PhosphoSitePlus" id="Q8BST6"/>
<dbReference type="PaxDb" id="10090-ENSMUSP00000072894"/>
<dbReference type="ProteomicsDB" id="287672">
    <molecule id="Q8BST6-1"/>
</dbReference>
<dbReference type="ProteomicsDB" id="287673">
    <molecule id="Q8BST6-2"/>
</dbReference>
<dbReference type="ProteomicsDB" id="287674">
    <molecule id="Q8BST6-3"/>
</dbReference>
<dbReference type="GeneID" id="93834"/>
<dbReference type="KEGG" id="mmu:93834"/>
<dbReference type="UCSC" id="uc007tji.1">
    <molecule id="Q8BST6-1"/>
    <property type="organism name" value="mouse"/>
</dbReference>
<dbReference type="AGR" id="MGI:1891445"/>
<dbReference type="CTD" id="57161"/>
<dbReference type="MGI" id="MGI:1891445">
    <property type="gene designation" value="Peli2"/>
</dbReference>
<dbReference type="eggNOG" id="KOG3842">
    <property type="taxonomic scope" value="Eukaryota"/>
</dbReference>
<dbReference type="InParanoid" id="Q8BST6"/>
<dbReference type="OrthoDB" id="8801906at2759"/>
<dbReference type="PhylomeDB" id="Q8BST6"/>
<dbReference type="Reactome" id="R-MMU-9020702">
    <property type="pathway name" value="Interleukin-1 signaling"/>
</dbReference>
<dbReference type="Reactome" id="R-MMU-937039">
    <property type="pathway name" value="IRAK1 recruits IKK complex"/>
</dbReference>
<dbReference type="Reactome" id="R-MMU-975144">
    <property type="pathway name" value="IRAK1 recruits IKK complex upon TLR7/8 or 9 stimulation"/>
</dbReference>
<dbReference type="UniPathway" id="UPA00143"/>
<dbReference type="BioGRID-ORCS" id="93834">
    <property type="hits" value="0 hits in 78 CRISPR screens"/>
</dbReference>
<dbReference type="ChiTaRS" id="Peli2">
    <property type="organism name" value="mouse"/>
</dbReference>
<dbReference type="PRO" id="PR:Q8BST6"/>
<dbReference type="Proteomes" id="UP000000589">
    <property type="component" value="Unplaced"/>
</dbReference>
<dbReference type="RNAct" id="Q8BST6">
    <property type="molecule type" value="protein"/>
</dbReference>
<dbReference type="GO" id="GO:0005829">
    <property type="term" value="C:cytosol"/>
    <property type="evidence" value="ECO:0000314"/>
    <property type="project" value="UniProtKB"/>
</dbReference>
<dbReference type="GO" id="GO:0016020">
    <property type="term" value="C:membrane"/>
    <property type="evidence" value="ECO:0000314"/>
    <property type="project" value="UniProtKB"/>
</dbReference>
<dbReference type="GO" id="GO:0030674">
    <property type="term" value="F:protein-macromolecule adaptor activity"/>
    <property type="evidence" value="ECO:0000353"/>
    <property type="project" value="UniProtKB"/>
</dbReference>
<dbReference type="GO" id="GO:0061630">
    <property type="term" value="F:ubiquitin protein ligase activity"/>
    <property type="evidence" value="ECO:0007669"/>
    <property type="project" value="InterPro"/>
</dbReference>
<dbReference type="GO" id="GO:0043410">
    <property type="term" value="P:positive regulation of MAPK cascade"/>
    <property type="evidence" value="ECO:0000266"/>
    <property type="project" value="MGI"/>
</dbReference>
<dbReference type="GO" id="GO:0000209">
    <property type="term" value="P:protein polyubiquitination"/>
    <property type="evidence" value="ECO:0007669"/>
    <property type="project" value="InterPro"/>
</dbReference>
<dbReference type="GO" id="GO:0008592">
    <property type="term" value="P:regulation of Toll signaling pathway"/>
    <property type="evidence" value="ECO:0007669"/>
    <property type="project" value="InterPro"/>
</dbReference>
<dbReference type="InterPro" id="IPR006800">
    <property type="entry name" value="Pellino_fam"/>
</dbReference>
<dbReference type="InterPro" id="IPR048334">
    <property type="entry name" value="Pellino_FHA"/>
</dbReference>
<dbReference type="InterPro" id="IPR048335">
    <property type="entry name" value="Pellino_RING"/>
</dbReference>
<dbReference type="PANTHER" id="PTHR12098:SF5">
    <property type="entry name" value="E3 UBIQUITIN-PROTEIN LIGASE PELLINO HOMOLOG 2"/>
    <property type="match status" value="1"/>
</dbReference>
<dbReference type="PANTHER" id="PTHR12098">
    <property type="entry name" value="E3 UBIQUITIN-PROTEIN LIGASE PELLINO-RELATED"/>
    <property type="match status" value="1"/>
</dbReference>
<dbReference type="Pfam" id="PF04710">
    <property type="entry name" value="Pellino_FHA"/>
    <property type="match status" value="1"/>
</dbReference>
<dbReference type="Pfam" id="PF20723">
    <property type="entry name" value="Pellino_RING"/>
    <property type="match status" value="1"/>
</dbReference>
<dbReference type="PIRSF" id="PIRSF038886">
    <property type="entry name" value="Pellino"/>
    <property type="match status" value="1"/>
</dbReference>
<organism>
    <name type="scientific">Mus musculus</name>
    <name type="common">Mouse</name>
    <dbReference type="NCBI Taxonomy" id="10090"/>
    <lineage>
        <taxon>Eukaryota</taxon>
        <taxon>Metazoa</taxon>
        <taxon>Chordata</taxon>
        <taxon>Craniata</taxon>
        <taxon>Vertebrata</taxon>
        <taxon>Euteleostomi</taxon>
        <taxon>Mammalia</taxon>
        <taxon>Eutheria</taxon>
        <taxon>Euarchontoglires</taxon>
        <taxon>Glires</taxon>
        <taxon>Rodentia</taxon>
        <taxon>Myomorpha</taxon>
        <taxon>Muroidea</taxon>
        <taxon>Muridae</taxon>
        <taxon>Murinae</taxon>
        <taxon>Mus</taxon>
        <taxon>Mus</taxon>
    </lineage>
</organism>
<evidence type="ECO:0000250" key="1"/>
<evidence type="ECO:0000269" key="2">
    <source>
    </source>
</evidence>
<evidence type="ECO:0000269" key="3">
    <source>
    </source>
</evidence>
<evidence type="ECO:0000269" key="4">
    <source>
    </source>
</evidence>
<evidence type="ECO:0000303" key="5">
    <source>
    </source>
</evidence>
<evidence type="ECO:0000303" key="6">
    <source>
    </source>
</evidence>
<evidence type="ECO:0000305" key="7"/>
<sequence>MFSPGQEEPSAPNKEPVKYRELVVLGYNGALPNGDRGRRKSRFALYKRTYASGVKPSTIHMVSTPQASKAISSRGHHSISYTLSRSQTVVVEYTHDKDTDMFQVGRSTESPIDFVVTDTVSGGQNEDAQITQSTISRFACRIVCDRNEPYTARIFAAGFDSSKNIFLGEKAAKWKNPDGHMDGLTTNGVLVMHPQGGFTEESQPGVWREISVCGDVYTLRETRSAQQRGKLVESETNVLQDGSLIDLCGATLLWRTADGLFHAPTQKHIEALRQEINAARPQCPVGLNTLAFPSINRKEVVEEKQPWAYLSCGHVHGYHSWGHRSDTEANERECPMCRTVGPYVPLWLGCEAGFYVDAGPPTHAFTPCGHVCSEKSAKYWSQIPLPHGTHAFHAACPFCATQLVGEQNCIKLIFQGPVD</sequence>
<protein>
    <recommendedName>
        <fullName>E3 ubiquitin-protein ligase pellino homolog 2</fullName>
        <shortName>Pellino-2</shortName>
        <ecNumber>2.3.2.27</ecNumber>
    </recommendedName>
    <alternativeName>
        <fullName evidence="7">RING-type E3 ubiquitin transferase pellino homolog 2</fullName>
    </alternativeName>
</protein>
<proteinExistence type="evidence at protein level"/>